<feature type="chain" id="PRO_0000167471" description="Ribosome-recycling factor">
    <location>
        <begin position="1"/>
        <end position="185"/>
    </location>
</feature>
<feature type="region of interest" description="Disordered" evidence="2">
    <location>
        <begin position="137"/>
        <end position="158"/>
    </location>
</feature>
<feature type="compositionally biased region" description="Basic and acidic residues" evidence="2">
    <location>
        <begin position="140"/>
        <end position="158"/>
    </location>
</feature>
<name>RRF_HELPY</name>
<sequence length="185" mass="20915">MLQAIYNETKDLMQKSIQALNRDFSTLRSAKVSVNILDHIKVDYYGTPTALNQVGSVMSLDATTLQISPWEKNLLKEIERSIQEANIGVNPNNDGETIKLFFPPMTSEQRKLIAKDAKAMGEKAKVAVRNIRQDANNQVKKLEKDKEISEDESKKAQEQIQKITDEAIKKIDESVKNKEDAILKV</sequence>
<gene>
    <name evidence="1" type="primary">frr</name>
    <name type="ordered locus">HP_1256</name>
</gene>
<reference key="1">
    <citation type="journal article" date="1997" name="Nature">
        <title>The complete genome sequence of the gastric pathogen Helicobacter pylori.</title>
        <authorList>
            <person name="Tomb J.-F."/>
            <person name="White O."/>
            <person name="Kerlavage A.R."/>
            <person name="Clayton R.A."/>
            <person name="Sutton G.G."/>
            <person name="Fleischmann R.D."/>
            <person name="Ketchum K.A."/>
            <person name="Klenk H.-P."/>
            <person name="Gill S.R."/>
            <person name="Dougherty B.A."/>
            <person name="Nelson K.E."/>
            <person name="Quackenbush J."/>
            <person name="Zhou L."/>
            <person name="Kirkness E.F."/>
            <person name="Peterson S.N."/>
            <person name="Loftus B.J."/>
            <person name="Richardson D.L."/>
            <person name="Dodson R.J."/>
            <person name="Khalak H.G."/>
            <person name="Glodek A."/>
            <person name="McKenney K."/>
            <person name="FitzGerald L.M."/>
            <person name="Lee N."/>
            <person name="Adams M.D."/>
            <person name="Hickey E.K."/>
            <person name="Berg D.E."/>
            <person name="Gocayne J.D."/>
            <person name="Utterback T.R."/>
            <person name="Peterson J.D."/>
            <person name="Kelley J.M."/>
            <person name="Cotton M.D."/>
            <person name="Weidman J.F."/>
            <person name="Fujii C."/>
            <person name="Bowman C."/>
            <person name="Watthey L."/>
            <person name="Wallin E."/>
            <person name="Hayes W.S."/>
            <person name="Borodovsky M."/>
            <person name="Karp P.D."/>
            <person name="Smith H.O."/>
            <person name="Fraser C.M."/>
            <person name="Venter J.C."/>
        </authorList>
    </citation>
    <scope>NUCLEOTIDE SEQUENCE [LARGE SCALE GENOMIC DNA]</scope>
    <source>
        <strain>ATCC 700392 / 26695</strain>
    </source>
</reference>
<dbReference type="EMBL" id="AE000511">
    <property type="protein sequence ID" value="AAD08302.1"/>
    <property type="molecule type" value="Genomic_DNA"/>
</dbReference>
<dbReference type="PIR" id="H64676">
    <property type="entry name" value="H64676"/>
</dbReference>
<dbReference type="RefSeq" id="NP_208048.1">
    <property type="nucleotide sequence ID" value="NC_000915.1"/>
</dbReference>
<dbReference type="RefSeq" id="WP_000938332.1">
    <property type="nucleotide sequence ID" value="NC_018939.1"/>
</dbReference>
<dbReference type="SMR" id="P56398"/>
<dbReference type="DIP" id="DIP-3584N"/>
<dbReference type="FunCoup" id="P56398">
    <property type="interactions" value="381"/>
</dbReference>
<dbReference type="IntAct" id="P56398">
    <property type="interactions" value="1"/>
</dbReference>
<dbReference type="MINT" id="P56398"/>
<dbReference type="STRING" id="85962.HP_1256"/>
<dbReference type="PaxDb" id="85962-C694_06490"/>
<dbReference type="EnsemblBacteria" id="AAD08302">
    <property type="protein sequence ID" value="AAD08302"/>
    <property type="gene ID" value="HP_1256"/>
</dbReference>
<dbReference type="KEGG" id="heo:C694_06490"/>
<dbReference type="KEGG" id="hpy:HP_1256"/>
<dbReference type="PATRIC" id="fig|85962.47.peg.1348"/>
<dbReference type="eggNOG" id="COG0233">
    <property type="taxonomic scope" value="Bacteria"/>
</dbReference>
<dbReference type="InParanoid" id="P56398"/>
<dbReference type="OrthoDB" id="9804006at2"/>
<dbReference type="PhylomeDB" id="P56398"/>
<dbReference type="Proteomes" id="UP000000429">
    <property type="component" value="Chromosome"/>
</dbReference>
<dbReference type="GO" id="GO:0005737">
    <property type="term" value="C:cytoplasm"/>
    <property type="evidence" value="ECO:0000318"/>
    <property type="project" value="GO_Central"/>
</dbReference>
<dbReference type="GO" id="GO:0005829">
    <property type="term" value="C:cytosol"/>
    <property type="evidence" value="ECO:0007669"/>
    <property type="project" value="GOC"/>
</dbReference>
<dbReference type="GO" id="GO:0043023">
    <property type="term" value="F:ribosomal large subunit binding"/>
    <property type="evidence" value="ECO:0000318"/>
    <property type="project" value="GO_Central"/>
</dbReference>
<dbReference type="GO" id="GO:0002184">
    <property type="term" value="P:cytoplasmic translational termination"/>
    <property type="evidence" value="ECO:0000318"/>
    <property type="project" value="GO_Central"/>
</dbReference>
<dbReference type="GO" id="GO:0006412">
    <property type="term" value="P:translation"/>
    <property type="evidence" value="ECO:0000318"/>
    <property type="project" value="GO_Central"/>
</dbReference>
<dbReference type="CDD" id="cd00520">
    <property type="entry name" value="RRF"/>
    <property type="match status" value="1"/>
</dbReference>
<dbReference type="FunFam" id="1.10.132.20:FF:000001">
    <property type="entry name" value="Ribosome-recycling factor"/>
    <property type="match status" value="1"/>
</dbReference>
<dbReference type="FunFam" id="3.30.1360.40:FF:000001">
    <property type="entry name" value="Ribosome-recycling factor"/>
    <property type="match status" value="1"/>
</dbReference>
<dbReference type="Gene3D" id="3.30.1360.40">
    <property type="match status" value="1"/>
</dbReference>
<dbReference type="Gene3D" id="1.10.132.20">
    <property type="entry name" value="Ribosome-recycling factor"/>
    <property type="match status" value="1"/>
</dbReference>
<dbReference type="HAMAP" id="MF_00040">
    <property type="entry name" value="RRF"/>
    <property type="match status" value="1"/>
</dbReference>
<dbReference type="InterPro" id="IPR002661">
    <property type="entry name" value="Ribosome_recyc_fac"/>
</dbReference>
<dbReference type="InterPro" id="IPR023584">
    <property type="entry name" value="Ribosome_recyc_fac_dom"/>
</dbReference>
<dbReference type="InterPro" id="IPR036191">
    <property type="entry name" value="RRF_sf"/>
</dbReference>
<dbReference type="NCBIfam" id="TIGR00496">
    <property type="entry name" value="frr"/>
    <property type="match status" value="1"/>
</dbReference>
<dbReference type="PANTHER" id="PTHR20982:SF3">
    <property type="entry name" value="MITOCHONDRIAL RIBOSOME RECYCLING FACTOR PSEUDO 1"/>
    <property type="match status" value="1"/>
</dbReference>
<dbReference type="PANTHER" id="PTHR20982">
    <property type="entry name" value="RIBOSOME RECYCLING FACTOR"/>
    <property type="match status" value="1"/>
</dbReference>
<dbReference type="Pfam" id="PF01765">
    <property type="entry name" value="RRF"/>
    <property type="match status" value="1"/>
</dbReference>
<dbReference type="SUPFAM" id="SSF55194">
    <property type="entry name" value="Ribosome recycling factor, RRF"/>
    <property type="match status" value="1"/>
</dbReference>
<protein>
    <recommendedName>
        <fullName evidence="1">Ribosome-recycling factor</fullName>
        <shortName evidence="1">RRF</shortName>
    </recommendedName>
    <alternativeName>
        <fullName evidence="1">Ribosome-releasing factor</fullName>
    </alternativeName>
</protein>
<organism>
    <name type="scientific">Helicobacter pylori (strain ATCC 700392 / 26695)</name>
    <name type="common">Campylobacter pylori</name>
    <dbReference type="NCBI Taxonomy" id="85962"/>
    <lineage>
        <taxon>Bacteria</taxon>
        <taxon>Pseudomonadati</taxon>
        <taxon>Campylobacterota</taxon>
        <taxon>Epsilonproteobacteria</taxon>
        <taxon>Campylobacterales</taxon>
        <taxon>Helicobacteraceae</taxon>
        <taxon>Helicobacter</taxon>
    </lineage>
</organism>
<proteinExistence type="inferred from homology"/>
<comment type="function">
    <text evidence="1">Responsible for the release of ribosomes from messenger RNA at the termination of protein biosynthesis. May increase the efficiency of translation by recycling ribosomes from one round of translation to another.</text>
</comment>
<comment type="subcellular location">
    <subcellularLocation>
        <location evidence="1">Cytoplasm</location>
    </subcellularLocation>
</comment>
<comment type="similarity">
    <text evidence="1">Belongs to the RRF family.</text>
</comment>
<evidence type="ECO:0000255" key="1">
    <source>
        <dbReference type="HAMAP-Rule" id="MF_00040"/>
    </source>
</evidence>
<evidence type="ECO:0000256" key="2">
    <source>
        <dbReference type="SAM" id="MobiDB-lite"/>
    </source>
</evidence>
<accession>P56398</accession>
<keyword id="KW-0963">Cytoplasm</keyword>
<keyword id="KW-0648">Protein biosynthesis</keyword>
<keyword id="KW-1185">Reference proteome</keyword>